<gene>
    <name evidence="1" type="primary">clpX</name>
    <name type="ordered locus">Rsph17025_1449</name>
</gene>
<organism>
    <name type="scientific">Cereibacter sphaeroides (strain ATCC 17025 / ATH 2.4.3)</name>
    <name type="common">Rhodobacter sphaeroides</name>
    <dbReference type="NCBI Taxonomy" id="349102"/>
    <lineage>
        <taxon>Bacteria</taxon>
        <taxon>Pseudomonadati</taxon>
        <taxon>Pseudomonadota</taxon>
        <taxon>Alphaproteobacteria</taxon>
        <taxon>Rhodobacterales</taxon>
        <taxon>Paracoccaceae</taxon>
        <taxon>Cereibacter</taxon>
    </lineage>
</organism>
<dbReference type="EMBL" id="CP000661">
    <property type="protein sequence ID" value="ABP70343.1"/>
    <property type="molecule type" value="Genomic_DNA"/>
</dbReference>
<dbReference type="SMR" id="A4WSH9"/>
<dbReference type="STRING" id="349102.Rsph17025_1449"/>
<dbReference type="KEGG" id="rsq:Rsph17025_1449"/>
<dbReference type="eggNOG" id="COG1219">
    <property type="taxonomic scope" value="Bacteria"/>
</dbReference>
<dbReference type="HOGENOM" id="CLU_014218_8_2_5"/>
<dbReference type="BioCyc" id="RSPH349102:G1G8M-1490-MONOMER"/>
<dbReference type="GO" id="GO:0009376">
    <property type="term" value="C:HslUV protease complex"/>
    <property type="evidence" value="ECO:0007669"/>
    <property type="project" value="TreeGrafter"/>
</dbReference>
<dbReference type="GO" id="GO:0005524">
    <property type="term" value="F:ATP binding"/>
    <property type="evidence" value="ECO:0007669"/>
    <property type="project" value="UniProtKB-UniRule"/>
</dbReference>
<dbReference type="GO" id="GO:0016887">
    <property type="term" value="F:ATP hydrolysis activity"/>
    <property type="evidence" value="ECO:0007669"/>
    <property type="project" value="InterPro"/>
</dbReference>
<dbReference type="GO" id="GO:0140662">
    <property type="term" value="F:ATP-dependent protein folding chaperone"/>
    <property type="evidence" value="ECO:0007669"/>
    <property type="project" value="InterPro"/>
</dbReference>
<dbReference type="GO" id="GO:0046983">
    <property type="term" value="F:protein dimerization activity"/>
    <property type="evidence" value="ECO:0007669"/>
    <property type="project" value="InterPro"/>
</dbReference>
<dbReference type="GO" id="GO:0051082">
    <property type="term" value="F:unfolded protein binding"/>
    <property type="evidence" value="ECO:0007669"/>
    <property type="project" value="UniProtKB-UniRule"/>
</dbReference>
<dbReference type="GO" id="GO:0008270">
    <property type="term" value="F:zinc ion binding"/>
    <property type="evidence" value="ECO:0007669"/>
    <property type="project" value="InterPro"/>
</dbReference>
<dbReference type="GO" id="GO:0051301">
    <property type="term" value="P:cell division"/>
    <property type="evidence" value="ECO:0007669"/>
    <property type="project" value="TreeGrafter"/>
</dbReference>
<dbReference type="GO" id="GO:0051603">
    <property type="term" value="P:proteolysis involved in protein catabolic process"/>
    <property type="evidence" value="ECO:0007669"/>
    <property type="project" value="TreeGrafter"/>
</dbReference>
<dbReference type="CDD" id="cd19497">
    <property type="entry name" value="RecA-like_ClpX"/>
    <property type="match status" value="1"/>
</dbReference>
<dbReference type="FunFam" id="1.10.8.60:FF:000002">
    <property type="entry name" value="ATP-dependent Clp protease ATP-binding subunit ClpX"/>
    <property type="match status" value="1"/>
</dbReference>
<dbReference type="FunFam" id="3.40.50.300:FF:000005">
    <property type="entry name" value="ATP-dependent Clp protease ATP-binding subunit ClpX"/>
    <property type="match status" value="1"/>
</dbReference>
<dbReference type="Gene3D" id="1.10.8.60">
    <property type="match status" value="1"/>
</dbReference>
<dbReference type="Gene3D" id="6.20.220.10">
    <property type="entry name" value="ClpX chaperone, C4-type zinc finger domain"/>
    <property type="match status" value="1"/>
</dbReference>
<dbReference type="Gene3D" id="3.40.50.300">
    <property type="entry name" value="P-loop containing nucleotide triphosphate hydrolases"/>
    <property type="match status" value="1"/>
</dbReference>
<dbReference type="HAMAP" id="MF_00175">
    <property type="entry name" value="ClpX"/>
    <property type="match status" value="1"/>
</dbReference>
<dbReference type="InterPro" id="IPR003593">
    <property type="entry name" value="AAA+_ATPase"/>
</dbReference>
<dbReference type="InterPro" id="IPR050052">
    <property type="entry name" value="ATP-dep_Clp_protease_ClpX"/>
</dbReference>
<dbReference type="InterPro" id="IPR003959">
    <property type="entry name" value="ATPase_AAA_core"/>
</dbReference>
<dbReference type="InterPro" id="IPR019489">
    <property type="entry name" value="Clp_ATPase_C"/>
</dbReference>
<dbReference type="InterPro" id="IPR004487">
    <property type="entry name" value="Clp_protease_ATP-bd_su_ClpX"/>
</dbReference>
<dbReference type="InterPro" id="IPR046425">
    <property type="entry name" value="ClpX_bact"/>
</dbReference>
<dbReference type="InterPro" id="IPR027417">
    <property type="entry name" value="P-loop_NTPase"/>
</dbReference>
<dbReference type="InterPro" id="IPR010603">
    <property type="entry name" value="Znf_CppX_C4"/>
</dbReference>
<dbReference type="InterPro" id="IPR038366">
    <property type="entry name" value="Znf_CppX_C4_sf"/>
</dbReference>
<dbReference type="NCBIfam" id="TIGR00382">
    <property type="entry name" value="clpX"/>
    <property type="match status" value="1"/>
</dbReference>
<dbReference type="NCBIfam" id="NF003745">
    <property type="entry name" value="PRK05342.1"/>
    <property type="match status" value="1"/>
</dbReference>
<dbReference type="PANTHER" id="PTHR48102:SF7">
    <property type="entry name" value="ATP-DEPENDENT CLP PROTEASE ATP-BINDING SUBUNIT CLPX-LIKE, MITOCHONDRIAL"/>
    <property type="match status" value="1"/>
</dbReference>
<dbReference type="PANTHER" id="PTHR48102">
    <property type="entry name" value="ATP-DEPENDENT CLP PROTEASE ATP-BINDING SUBUNIT CLPX-LIKE, MITOCHONDRIAL-RELATED"/>
    <property type="match status" value="1"/>
</dbReference>
<dbReference type="Pfam" id="PF07724">
    <property type="entry name" value="AAA_2"/>
    <property type="match status" value="1"/>
</dbReference>
<dbReference type="Pfam" id="PF10431">
    <property type="entry name" value="ClpB_D2-small"/>
    <property type="match status" value="1"/>
</dbReference>
<dbReference type="Pfam" id="PF06689">
    <property type="entry name" value="zf-C4_ClpX"/>
    <property type="match status" value="1"/>
</dbReference>
<dbReference type="SMART" id="SM00382">
    <property type="entry name" value="AAA"/>
    <property type="match status" value="1"/>
</dbReference>
<dbReference type="SMART" id="SM01086">
    <property type="entry name" value="ClpB_D2-small"/>
    <property type="match status" value="1"/>
</dbReference>
<dbReference type="SMART" id="SM00994">
    <property type="entry name" value="zf-C4_ClpX"/>
    <property type="match status" value="1"/>
</dbReference>
<dbReference type="SUPFAM" id="SSF57716">
    <property type="entry name" value="Glucocorticoid receptor-like (DNA-binding domain)"/>
    <property type="match status" value="1"/>
</dbReference>
<dbReference type="SUPFAM" id="SSF52540">
    <property type="entry name" value="P-loop containing nucleoside triphosphate hydrolases"/>
    <property type="match status" value="1"/>
</dbReference>
<dbReference type="PROSITE" id="PS51902">
    <property type="entry name" value="CLPX_ZB"/>
    <property type="match status" value="1"/>
</dbReference>
<accession>A4WSH9</accession>
<comment type="function">
    <text evidence="1">ATP-dependent specificity component of the Clp protease. It directs the protease to specific substrates. Can perform chaperone functions in the absence of ClpP.</text>
</comment>
<comment type="subunit">
    <text evidence="1">Component of the ClpX-ClpP complex. Forms a hexameric ring that, in the presence of ATP, binds to fourteen ClpP subunits assembled into a disk-like structure with a central cavity, resembling the structure of eukaryotic proteasomes.</text>
</comment>
<comment type="similarity">
    <text evidence="1">Belongs to the ClpX chaperone family.</text>
</comment>
<proteinExistence type="inferred from homology"/>
<sequence>MANNSGSDSKNTLYCSFCGKSQHEVRKLIAGPTVFICDECVELCMDIIREETKSTGLKSADGVPTPREICKVLDDYVIGQMHAKRVLSVAVHNHYKRLNHSSKNDIELSKSNILLIGPTGCGKTLLAQTLARILDVPFTMADATTLTEAGYVGEDVENIILKLLQASEYNVERAQRGIVYIDEVDKITRKSDNPSITRDVSGEGVQQALLKIMEGTVASVPPQGGRKHPQQEFLQVDTTNILFICGGAFAGLEKIIAQRGKGSGIGFGAEVKDPDSRGVGELFTELEPEDLLKFGLIPEFVGRLPVIATLTDLDEAALVTILTEPKNALVKQYQRLFEIEGVKLTFTADALTAIAKRAIKRKTGARGLRSIMEDILLDTMFELPGLEGVEEVVVNEEAVNSGAKPLLIYTEVTKKKDATAS</sequence>
<keyword id="KW-0067">ATP-binding</keyword>
<keyword id="KW-0143">Chaperone</keyword>
<keyword id="KW-0479">Metal-binding</keyword>
<keyword id="KW-0547">Nucleotide-binding</keyword>
<keyword id="KW-0862">Zinc</keyword>
<protein>
    <recommendedName>
        <fullName evidence="1">ATP-dependent Clp protease ATP-binding subunit ClpX</fullName>
    </recommendedName>
</protein>
<reference key="1">
    <citation type="submission" date="2007-04" db="EMBL/GenBank/DDBJ databases">
        <title>Complete sequence of chromosome of Rhodobacter sphaeroides ATCC 17025.</title>
        <authorList>
            <consortium name="US DOE Joint Genome Institute"/>
            <person name="Copeland A."/>
            <person name="Lucas S."/>
            <person name="Lapidus A."/>
            <person name="Barry K."/>
            <person name="Detter J.C."/>
            <person name="Glavina del Rio T."/>
            <person name="Hammon N."/>
            <person name="Israni S."/>
            <person name="Dalin E."/>
            <person name="Tice H."/>
            <person name="Pitluck S."/>
            <person name="Chertkov O."/>
            <person name="Brettin T."/>
            <person name="Bruce D."/>
            <person name="Han C."/>
            <person name="Schmutz J."/>
            <person name="Larimer F."/>
            <person name="Land M."/>
            <person name="Hauser L."/>
            <person name="Kyrpides N."/>
            <person name="Kim E."/>
            <person name="Richardson P."/>
            <person name="Mackenzie C."/>
            <person name="Choudhary M."/>
            <person name="Donohue T.J."/>
            <person name="Kaplan S."/>
        </authorList>
    </citation>
    <scope>NUCLEOTIDE SEQUENCE [LARGE SCALE GENOMIC DNA]</scope>
    <source>
        <strain>ATCC 17025 / ATH 2.4.3</strain>
    </source>
</reference>
<feature type="chain" id="PRO_1000024640" description="ATP-dependent Clp protease ATP-binding subunit ClpX">
    <location>
        <begin position="1"/>
        <end position="421"/>
    </location>
</feature>
<feature type="domain" description="ClpX-type ZB" evidence="2">
    <location>
        <begin position="3"/>
        <end position="56"/>
    </location>
</feature>
<feature type="binding site" evidence="2">
    <location>
        <position position="15"/>
    </location>
    <ligand>
        <name>Zn(2+)</name>
        <dbReference type="ChEBI" id="CHEBI:29105"/>
    </ligand>
</feature>
<feature type="binding site" evidence="2">
    <location>
        <position position="18"/>
    </location>
    <ligand>
        <name>Zn(2+)</name>
        <dbReference type="ChEBI" id="CHEBI:29105"/>
    </ligand>
</feature>
<feature type="binding site" evidence="2">
    <location>
        <position position="37"/>
    </location>
    <ligand>
        <name>Zn(2+)</name>
        <dbReference type="ChEBI" id="CHEBI:29105"/>
    </ligand>
</feature>
<feature type="binding site" evidence="2">
    <location>
        <position position="40"/>
    </location>
    <ligand>
        <name>Zn(2+)</name>
        <dbReference type="ChEBI" id="CHEBI:29105"/>
    </ligand>
</feature>
<feature type="binding site" evidence="1">
    <location>
        <begin position="118"/>
        <end position="125"/>
    </location>
    <ligand>
        <name>ATP</name>
        <dbReference type="ChEBI" id="CHEBI:30616"/>
    </ligand>
</feature>
<evidence type="ECO:0000255" key="1">
    <source>
        <dbReference type="HAMAP-Rule" id="MF_00175"/>
    </source>
</evidence>
<evidence type="ECO:0000255" key="2">
    <source>
        <dbReference type="PROSITE-ProRule" id="PRU01250"/>
    </source>
</evidence>
<name>CLPX_CERS5</name>